<feature type="chain" id="PRO_0000079987" description="DCC-interacting protein 13-beta">
    <location>
        <begin position="1"/>
        <end position="664"/>
    </location>
</feature>
<feature type="domain" description="BAR" evidence="5">
    <location>
        <begin position="3"/>
        <end position="268"/>
    </location>
</feature>
<feature type="domain" description="PH" evidence="3">
    <location>
        <begin position="277"/>
        <end position="375"/>
    </location>
</feature>
<feature type="domain" description="PID" evidence="4">
    <location>
        <begin position="488"/>
        <end position="637"/>
    </location>
</feature>
<feature type="region of interest" description="Required for RAB5A binding" evidence="1">
    <location>
        <begin position="1"/>
        <end position="428"/>
    </location>
</feature>
<feature type="region of interest" description="Disordered" evidence="6">
    <location>
        <begin position="643"/>
        <end position="664"/>
    </location>
</feature>
<feature type="compositionally biased region" description="Basic and acidic residues" evidence="6">
    <location>
        <begin position="654"/>
        <end position="664"/>
    </location>
</feature>
<feature type="site" description="Breakpoint for chromosomal translocation" evidence="7">
    <location>
        <begin position="234"/>
        <end position="235"/>
    </location>
</feature>
<feature type="splice variant" id="VSP_044771" description="In isoform 2." evidence="18">
    <location>
        <begin position="1"/>
        <end position="43"/>
    </location>
</feature>
<feature type="splice variant" id="VSP_044772" description="In isoform 3." evidence="18">
    <original>N</original>
    <variation>NDVCLFL</variation>
    <location>
        <position position="138"/>
    </location>
</feature>
<feature type="sequence variant" id="VAR_021505" description="In dbSNP:rs2272495." evidence="8 10">
    <original>A</original>
    <variation>V</variation>
    <location>
        <position position="433"/>
    </location>
</feature>
<feature type="sequence conflict" description="In Ref. 2." evidence="20" ref="2">
    <original>T</original>
    <variation>A</variation>
    <location>
        <position position="295"/>
    </location>
</feature>
<feature type="sequence conflict" description="In Ref. 2." evidence="20" ref="2">
    <original>T</original>
    <variation>A</variation>
    <location>
        <position position="448"/>
    </location>
</feature>
<feature type="sequence conflict" description="In Ref. 2; BAH12496." evidence="20" ref="2">
    <original>N</original>
    <variation>S</variation>
    <location>
        <position position="528"/>
    </location>
</feature>
<feature type="sequence conflict" description="In Ref. 2; BAH12397." evidence="20" ref="2">
    <original>L</original>
    <variation>P</variation>
    <location>
        <position position="575"/>
    </location>
</feature>
<feature type="helix" evidence="26">
    <location>
        <begin position="9"/>
        <end position="11"/>
    </location>
</feature>
<feature type="turn" evidence="26">
    <location>
        <begin position="12"/>
        <end position="14"/>
    </location>
</feature>
<feature type="helix" evidence="26">
    <location>
        <begin position="17"/>
        <end position="70"/>
    </location>
</feature>
<feature type="helix" evidence="26">
    <location>
        <begin position="80"/>
        <end position="110"/>
    </location>
</feature>
<feature type="helix" evidence="26">
    <location>
        <begin position="112"/>
        <end position="148"/>
    </location>
</feature>
<feature type="strand" evidence="26">
    <location>
        <begin position="152"/>
        <end position="154"/>
    </location>
</feature>
<feature type="helix" evidence="26">
    <location>
        <begin position="157"/>
        <end position="217"/>
    </location>
</feature>
<feature type="helix" evidence="26">
    <location>
        <begin position="220"/>
        <end position="254"/>
    </location>
</feature>
<feature type="helix" evidence="26">
    <location>
        <begin position="259"/>
        <end position="261"/>
    </location>
</feature>
<feature type="helix" evidence="26">
    <location>
        <begin position="266"/>
        <end position="269"/>
    </location>
</feature>
<feature type="strand" evidence="26">
    <location>
        <begin position="281"/>
        <end position="288"/>
    </location>
</feature>
<feature type="strand" evidence="26">
    <location>
        <begin position="291"/>
        <end position="293"/>
    </location>
</feature>
<feature type="strand" evidence="26">
    <location>
        <begin position="296"/>
        <end position="305"/>
    </location>
</feature>
<feature type="strand" evidence="26">
    <location>
        <begin position="308"/>
        <end position="312"/>
    </location>
</feature>
<feature type="strand" evidence="26">
    <location>
        <begin position="320"/>
        <end position="324"/>
    </location>
</feature>
<feature type="strand" evidence="26">
    <location>
        <begin position="329"/>
        <end position="333"/>
    </location>
</feature>
<feature type="strand" evidence="26">
    <location>
        <begin position="341"/>
        <end position="345"/>
    </location>
</feature>
<feature type="strand" evidence="26">
    <location>
        <begin position="351"/>
        <end position="356"/>
    </location>
</feature>
<feature type="helix" evidence="26">
    <location>
        <begin position="360"/>
        <end position="373"/>
    </location>
</feature>
<accession>Q8NEU8</accession>
<accession>B7Z411</accession>
<accession>B7Z4B0</accession>
<accession>F5GZG0</accession>
<accession>F8W1P5</accession>
<accession>Q8N4R7</accession>
<accession>Q9NVL2</accession>
<organism>
    <name type="scientific">Homo sapiens</name>
    <name type="common">Human</name>
    <dbReference type="NCBI Taxonomy" id="9606"/>
    <lineage>
        <taxon>Eukaryota</taxon>
        <taxon>Metazoa</taxon>
        <taxon>Chordata</taxon>
        <taxon>Craniata</taxon>
        <taxon>Vertebrata</taxon>
        <taxon>Euteleostomi</taxon>
        <taxon>Mammalia</taxon>
        <taxon>Eutheria</taxon>
        <taxon>Euarchontoglires</taxon>
        <taxon>Primates</taxon>
        <taxon>Haplorrhini</taxon>
        <taxon>Catarrhini</taxon>
        <taxon>Hominidae</taxon>
        <taxon>Homo</taxon>
    </lineage>
</organism>
<proteinExistence type="evidence at protein level"/>
<protein>
    <recommendedName>
        <fullName evidence="20">DCC-interacting protein 13-beta</fullName>
        <shortName evidence="19">Dip13-beta</shortName>
    </recommendedName>
    <alternativeName>
        <fullName evidence="20">Adapter protein containing PH domain, PTB domain and leucine zipper motif 2</fullName>
    </alternativeName>
</protein>
<gene>
    <name evidence="23" type="primary">APPL2</name>
    <name type="synonym">DIP13B</name>
</gene>
<reference evidence="22" key="1">
    <citation type="submission" date="2002-05" db="EMBL/GenBank/DDBJ databases">
        <title>Identification of DIP13 beta, a novel protein related to the DCC-interacting protein 13 alpha (DIP13alpha).</title>
        <authorList>
            <person name="Chen Y.Q."/>
        </authorList>
    </citation>
    <scope>NUCLEOTIDE SEQUENCE [MRNA] (ISOFORM 1)</scope>
</reference>
<reference key="2">
    <citation type="journal article" date="2004" name="Nat. Genet.">
        <title>Complete sequencing and characterization of 21,243 full-length human cDNAs.</title>
        <authorList>
            <person name="Ota T."/>
            <person name="Suzuki Y."/>
            <person name="Nishikawa T."/>
            <person name="Otsuki T."/>
            <person name="Sugiyama T."/>
            <person name="Irie R."/>
            <person name="Wakamatsu A."/>
            <person name="Hayashi K."/>
            <person name="Sato H."/>
            <person name="Nagai K."/>
            <person name="Kimura K."/>
            <person name="Makita H."/>
            <person name="Sekine M."/>
            <person name="Obayashi M."/>
            <person name="Nishi T."/>
            <person name="Shibahara T."/>
            <person name="Tanaka T."/>
            <person name="Ishii S."/>
            <person name="Yamamoto J."/>
            <person name="Saito K."/>
            <person name="Kawai Y."/>
            <person name="Isono Y."/>
            <person name="Nakamura Y."/>
            <person name="Nagahari K."/>
            <person name="Murakami K."/>
            <person name="Yasuda T."/>
            <person name="Iwayanagi T."/>
            <person name="Wagatsuma M."/>
            <person name="Shiratori A."/>
            <person name="Sudo H."/>
            <person name="Hosoiri T."/>
            <person name="Kaku Y."/>
            <person name="Kodaira H."/>
            <person name="Kondo H."/>
            <person name="Sugawara M."/>
            <person name="Takahashi M."/>
            <person name="Kanda K."/>
            <person name="Yokoi T."/>
            <person name="Furuya T."/>
            <person name="Kikkawa E."/>
            <person name="Omura Y."/>
            <person name="Abe K."/>
            <person name="Kamihara K."/>
            <person name="Katsuta N."/>
            <person name="Sato K."/>
            <person name="Tanikawa M."/>
            <person name="Yamazaki M."/>
            <person name="Ninomiya K."/>
            <person name="Ishibashi T."/>
            <person name="Yamashita H."/>
            <person name="Murakawa K."/>
            <person name="Fujimori K."/>
            <person name="Tanai H."/>
            <person name="Kimata M."/>
            <person name="Watanabe M."/>
            <person name="Hiraoka S."/>
            <person name="Chiba Y."/>
            <person name="Ishida S."/>
            <person name="Ono Y."/>
            <person name="Takiguchi S."/>
            <person name="Watanabe S."/>
            <person name="Yosida M."/>
            <person name="Hotuta T."/>
            <person name="Kusano J."/>
            <person name="Kanehori K."/>
            <person name="Takahashi-Fujii A."/>
            <person name="Hara H."/>
            <person name="Tanase T.-O."/>
            <person name="Nomura Y."/>
            <person name="Togiya S."/>
            <person name="Komai F."/>
            <person name="Hara R."/>
            <person name="Takeuchi K."/>
            <person name="Arita M."/>
            <person name="Imose N."/>
            <person name="Musashino K."/>
            <person name="Yuuki H."/>
            <person name="Oshima A."/>
            <person name="Sasaki N."/>
            <person name="Aotsuka S."/>
            <person name="Yoshikawa Y."/>
            <person name="Matsunawa H."/>
            <person name="Ichihara T."/>
            <person name="Shiohata N."/>
            <person name="Sano S."/>
            <person name="Moriya S."/>
            <person name="Momiyama H."/>
            <person name="Satoh N."/>
            <person name="Takami S."/>
            <person name="Terashima Y."/>
            <person name="Suzuki O."/>
            <person name="Nakagawa S."/>
            <person name="Senoh A."/>
            <person name="Mizoguchi H."/>
            <person name="Goto Y."/>
            <person name="Shimizu F."/>
            <person name="Wakebe H."/>
            <person name="Hishigaki H."/>
            <person name="Watanabe T."/>
            <person name="Sugiyama A."/>
            <person name="Takemoto M."/>
            <person name="Kawakami B."/>
            <person name="Yamazaki M."/>
            <person name="Watanabe K."/>
            <person name="Kumagai A."/>
            <person name="Itakura S."/>
            <person name="Fukuzumi Y."/>
            <person name="Fujimori Y."/>
            <person name="Komiyama M."/>
            <person name="Tashiro H."/>
            <person name="Tanigami A."/>
            <person name="Fujiwara T."/>
            <person name="Ono T."/>
            <person name="Yamada K."/>
            <person name="Fujii Y."/>
            <person name="Ozaki K."/>
            <person name="Hirao M."/>
            <person name="Ohmori Y."/>
            <person name="Kawabata A."/>
            <person name="Hikiji T."/>
            <person name="Kobatake N."/>
            <person name="Inagaki H."/>
            <person name="Ikema Y."/>
            <person name="Okamoto S."/>
            <person name="Okitani R."/>
            <person name="Kawakami T."/>
            <person name="Noguchi S."/>
            <person name="Itoh T."/>
            <person name="Shigeta K."/>
            <person name="Senba T."/>
            <person name="Matsumura K."/>
            <person name="Nakajima Y."/>
            <person name="Mizuno T."/>
            <person name="Morinaga M."/>
            <person name="Sasaki M."/>
            <person name="Togashi T."/>
            <person name="Oyama M."/>
            <person name="Hata H."/>
            <person name="Watanabe M."/>
            <person name="Komatsu T."/>
            <person name="Mizushima-Sugano J."/>
            <person name="Satoh T."/>
            <person name="Shirai Y."/>
            <person name="Takahashi Y."/>
            <person name="Nakagawa K."/>
            <person name="Okumura K."/>
            <person name="Nagase T."/>
            <person name="Nomura N."/>
            <person name="Kikuchi H."/>
            <person name="Masuho Y."/>
            <person name="Yamashita R."/>
            <person name="Nakai K."/>
            <person name="Yada T."/>
            <person name="Nakamura Y."/>
            <person name="Ohara O."/>
            <person name="Isogai T."/>
            <person name="Sugano S."/>
        </authorList>
    </citation>
    <scope>NUCLEOTIDE SEQUENCE [LARGE SCALE MRNA] (ISOFORMS 1; 2 AND 3)</scope>
    <scope>VARIANT VAL-433</scope>
    <source>
        <tissue>Colon</tissue>
        <tissue>Teratocarcinoma</tissue>
    </source>
</reference>
<reference key="3">
    <citation type="journal article" date="2006" name="Nature">
        <title>The finished DNA sequence of human chromosome 12.</title>
        <authorList>
            <person name="Scherer S.E."/>
            <person name="Muzny D.M."/>
            <person name="Buhay C.J."/>
            <person name="Chen R."/>
            <person name="Cree A."/>
            <person name="Ding Y."/>
            <person name="Dugan-Rocha S."/>
            <person name="Gill R."/>
            <person name="Gunaratne P."/>
            <person name="Harris R.A."/>
            <person name="Hawes A.C."/>
            <person name="Hernandez J."/>
            <person name="Hodgson A.V."/>
            <person name="Hume J."/>
            <person name="Jackson A."/>
            <person name="Khan Z.M."/>
            <person name="Kovar-Smith C."/>
            <person name="Lewis L.R."/>
            <person name="Lozado R.J."/>
            <person name="Metzker M.L."/>
            <person name="Milosavljevic A."/>
            <person name="Miner G.R."/>
            <person name="Montgomery K.T."/>
            <person name="Morgan M.B."/>
            <person name="Nazareth L.V."/>
            <person name="Scott G."/>
            <person name="Sodergren E."/>
            <person name="Song X.-Z."/>
            <person name="Steffen D."/>
            <person name="Lovering R.C."/>
            <person name="Wheeler D.A."/>
            <person name="Worley K.C."/>
            <person name="Yuan Y."/>
            <person name="Zhang Z."/>
            <person name="Adams C.Q."/>
            <person name="Ansari-Lari M.A."/>
            <person name="Ayele M."/>
            <person name="Brown M.J."/>
            <person name="Chen G."/>
            <person name="Chen Z."/>
            <person name="Clerc-Blankenburg K.P."/>
            <person name="Davis C."/>
            <person name="Delgado O."/>
            <person name="Dinh H.H."/>
            <person name="Draper H."/>
            <person name="Gonzalez-Garay M.L."/>
            <person name="Havlak P."/>
            <person name="Jackson L.R."/>
            <person name="Jacob L.S."/>
            <person name="Kelly S.H."/>
            <person name="Li L."/>
            <person name="Li Z."/>
            <person name="Liu J."/>
            <person name="Liu W."/>
            <person name="Lu J."/>
            <person name="Maheshwari M."/>
            <person name="Nguyen B.-V."/>
            <person name="Okwuonu G.O."/>
            <person name="Pasternak S."/>
            <person name="Perez L.M."/>
            <person name="Plopper F.J.H."/>
            <person name="Santibanez J."/>
            <person name="Shen H."/>
            <person name="Tabor P.E."/>
            <person name="Verduzco D."/>
            <person name="Waldron L."/>
            <person name="Wang Q."/>
            <person name="Williams G.A."/>
            <person name="Zhang J."/>
            <person name="Zhou J."/>
            <person name="Allen C.C."/>
            <person name="Amin A.G."/>
            <person name="Anyalebechi V."/>
            <person name="Bailey M."/>
            <person name="Barbaria J.A."/>
            <person name="Bimage K.E."/>
            <person name="Bryant N.P."/>
            <person name="Burch P.E."/>
            <person name="Burkett C.E."/>
            <person name="Burrell K.L."/>
            <person name="Calderon E."/>
            <person name="Cardenas V."/>
            <person name="Carter K."/>
            <person name="Casias K."/>
            <person name="Cavazos I."/>
            <person name="Cavazos S.R."/>
            <person name="Ceasar H."/>
            <person name="Chacko J."/>
            <person name="Chan S.N."/>
            <person name="Chavez D."/>
            <person name="Christopoulos C."/>
            <person name="Chu J."/>
            <person name="Cockrell R."/>
            <person name="Cox C.D."/>
            <person name="Dang M."/>
            <person name="Dathorne S.R."/>
            <person name="David R."/>
            <person name="Davis C.M."/>
            <person name="Davy-Carroll L."/>
            <person name="Deshazo D.R."/>
            <person name="Donlin J.E."/>
            <person name="D'Souza L."/>
            <person name="Eaves K.A."/>
            <person name="Egan A."/>
            <person name="Emery-Cohen A.J."/>
            <person name="Escotto M."/>
            <person name="Flagg N."/>
            <person name="Forbes L.D."/>
            <person name="Gabisi A.M."/>
            <person name="Garza M."/>
            <person name="Hamilton C."/>
            <person name="Henderson N."/>
            <person name="Hernandez O."/>
            <person name="Hines S."/>
            <person name="Hogues M.E."/>
            <person name="Huang M."/>
            <person name="Idlebird D.G."/>
            <person name="Johnson R."/>
            <person name="Jolivet A."/>
            <person name="Jones S."/>
            <person name="Kagan R."/>
            <person name="King L.M."/>
            <person name="Leal B."/>
            <person name="Lebow H."/>
            <person name="Lee S."/>
            <person name="LeVan J.M."/>
            <person name="Lewis L.C."/>
            <person name="London P."/>
            <person name="Lorensuhewa L.M."/>
            <person name="Loulseged H."/>
            <person name="Lovett D.A."/>
            <person name="Lucier A."/>
            <person name="Lucier R.L."/>
            <person name="Ma J."/>
            <person name="Madu R.C."/>
            <person name="Mapua P."/>
            <person name="Martindale A.D."/>
            <person name="Martinez E."/>
            <person name="Massey E."/>
            <person name="Mawhiney S."/>
            <person name="Meador M.G."/>
            <person name="Mendez S."/>
            <person name="Mercado C."/>
            <person name="Mercado I.C."/>
            <person name="Merritt C.E."/>
            <person name="Miner Z.L."/>
            <person name="Minja E."/>
            <person name="Mitchell T."/>
            <person name="Mohabbat F."/>
            <person name="Mohabbat K."/>
            <person name="Montgomery B."/>
            <person name="Moore N."/>
            <person name="Morris S."/>
            <person name="Munidasa M."/>
            <person name="Ngo R.N."/>
            <person name="Nguyen N.B."/>
            <person name="Nickerson E."/>
            <person name="Nwaokelemeh O.O."/>
            <person name="Nwokenkwo S."/>
            <person name="Obregon M."/>
            <person name="Oguh M."/>
            <person name="Oragunye N."/>
            <person name="Oviedo R.J."/>
            <person name="Parish B.J."/>
            <person name="Parker D.N."/>
            <person name="Parrish J."/>
            <person name="Parks K.L."/>
            <person name="Paul H.A."/>
            <person name="Payton B.A."/>
            <person name="Perez A."/>
            <person name="Perrin W."/>
            <person name="Pickens A."/>
            <person name="Primus E.L."/>
            <person name="Pu L.-L."/>
            <person name="Puazo M."/>
            <person name="Quiles M.M."/>
            <person name="Quiroz J.B."/>
            <person name="Rabata D."/>
            <person name="Reeves K."/>
            <person name="Ruiz S.J."/>
            <person name="Shao H."/>
            <person name="Sisson I."/>
            <person name="Sonaike T."/>
            <person name="Sorelle R.P."/>
            <person name="Sutton A.E."/>
            <person name="Svatek A.F."/>
            <person name="Svetz L.A."/>
            <person name="Tamerisa K.S."/>
            <person name="Taylor T.R."/>
            <person name="Teague B."/>
            <person name="Thomas N."/>
            <person name="Thorn R.D."/>
            <person name="Trejos Z.Y."/>
            <person name="Trevino B.K."/>
            <person name="Ukegbu O.N."/>
            <person name="Urban J.B."/>
            <person name="Vasquez L.I."/>
            <person name="Vera V.A."/>
            <person name="Villasana D.M."/>
            <person name="Wang L."/>
            <person name="Ward-Moore S."/>
            <person name="Warren J.T."/>
            <person name="Wei X."/>
            <person name="White F."/>
            <person name="Williamson A.L."/>
            <person name="Wleczyk R."/>
            <person name="Wooden H.S."/>
            <person name="Wooden S.H."/>
            <person name="Yen J."/>
            <person name="Yoon L."/>
            <person name="Yoon V."/>
            <person name="Zorrilla S.E."/>
            <person name="Nelson D."/>
            <person name="Kucherlapati R."/>
            <person name="Weinstock G."/>
            <person name="Gibbs R.A."/>
        </authorList>
    </citation>
    <scope>NUCLEOTIDE SEQUENCE [LARGE SCALE GENOMIC DNA]</scope>
</reference>
<reference evidence="21" key="4">
    <citation type="journal article" date="2004" name="Genome Res.">
        <title>The status, quality, and expansion of the NIH full-length cDNA project: the Mammalian Gene Collection (MGC).</title>
        <authorList>
            <consortium name="The MGC Project Team"/>
        </authorList>
    </citation>
    <scope>NUCLEOTIDE SEQUENCE [LARGE SCALE MRNA] (ISOFORM 1)</scope>
    <scope>VARIANT VAL-433</scope>
    <source>
        <tissue evidence="21">Brain</tissue>
    </source>
</reference>
<reference evidence="20" key="5">
    <citation type="journal article" date="2001" name="Am. J. Hum. Genet.">
        <title>Disruption of the ProSAP2 gene in a t(12;22)(q24.1;q13.3) is associated with the 22q13.3 deletion syndrome.</title>
        <authorList>
            <person name="Bonaglia M.C."/>
            <person name="Giorda R."/>
            <person name="Borgatti R."/>
            <person name="Felisari G."/>
            <person name="Gagliardi C."/>
            <person name="Selicorni A."/>
            <person name="Zuffardi O."/>
        </authorList>
    </citation>
    <scope>CHROMOSOMAL TRANSLOCATION WITH SHANK3</scope>
    <scope>TISSUE SPECIFICITY</scope>
</reference>
<reference evidence="20" key="6">
    <citation type="journal article" date="2004" name="Cell">
        <title>APPL proteins link Rab5 to nuclear signal transduction via an endosomal compartment.</title>
        <authorList>
            <person name="Miaczynska M."/>
            <person name="Christoforidis S."/>
            <person name="Giner A."/>
            <person name="Shevchenko A."/>
            <person name="Uttenweiler-Joseph S."/>
            <person name="Habermann B."/>
            <person name="Wilm M."/>
            <person name="Parton R.G."/>
            <person name="Zerial M."/>
        </authorList>
    </citation>
    <scope>FUNCTION</scope>
    <scope>SUBCELLULAR LOCATION</scope>
    <scope>INTERACTION WITH RAB5A AND NURD/MECP1 COMPLEX</scope>
    <scope>IDENTIFICATION BY MASS SPECTROMETRY</scope>
</reference>
<reference key="7">
    <citation type="journal article" date="2007" name="Mol. Cell. Endocrinol.">
        <title>APPL1, APPL2, Akt2 and FOXO1a interact with FSHR in a potential signaling complex.</title>
        <authorList>
            <person name="Nechamen C.A."/>
            <person name="Thomas R.M."/>
            <person name="Dias J.A."/>
        </authorList>
    </citation>
    <scope>INTERACTION WITH FSHR AND APPL1</scope>
</reference>
<reference key="8">
    <citation type="journal article" date="2008" name="Traffic">
        <title>Membrane targeting by APPL1 and APPL2: dynamic scaffolds that oligomerize and bind phosphoinositides.</title>
        <authorList>
            <person name="Chial H.J."/>
            <person name="Wu R."/>
            <person name="Ustach C.V."/>
            <person name="McPhail L.C."/>
            <person name="Mobley W.C."/>
            <person name="Chen Y.Q."/>
        </authorList>
    </citation>
    <scope>SUBUNIT</scope>
    <scope>INTERACTION WITH APPL1</scope>
    <scope>DOMAIN</scope>
    <scope>SUBCELLULAR LOCATION</scope>
</reference>
<reference key="9">
    <citation type="journal article" date="2009" name="J. Biol. Chem.">
        <title>Endosomal adaptor proteins APPL1 and APPL2 are novel activators of beta-catenin/TCF-mediated transcription.</title>
        <authorList>
            <person name="Rashid S."/>
            <person name="Pilecka I."/>
            <person name="Torun A."/>
            <person name="Olchowik M."/>
            <person name="Bielinska B."/>
            <person name="Miaczynska M."/>
        </authorList>
    </citation>
    <scope>INTERACTION WITH RUVBL2; CTNNB1; APPL1; HDAC1 AND HDAC2</scope>
    <scope>FUNCTION</scope>
    <scope>DOMAIN</scope>
</reference>
<reference key="10">
    <citation type="journal article" date="2011" name="Traffic">
        <title>Biochemical characterization of APPL endosomes: the role of annexin A2 in APPL membrane recruitment.</title>
        <authorList>
            <person name="Urbanska A."/>
            <person name="Sadowski L."/>
            <person name="Kalaidzidis Y."/>
            <person name="Miaczynska M."/>
        </authorList>
    </citation>
    <scope>INTERACTION WITH ANXA2</scope>
    <scope>SUBCELLULAR LOCATION</scope>
</reference>
<reference key="11">
    <citation type="journal article" date="2012" name="Proc. Natl. Acad. Sci. U.S.A.">
        <title>N-terminal acetylome analyses and functional insights of the N-terminal acetyltransferase NatB.</title>
        <authorList>
            <person name="Van Damme P."/>
            <person name="Lasa M."/>
            <person name="Polevoda B."/>
            <person name="Gazquez C."/>
            <person name="Elosegui-Artola A."/>
            <person name="Kim D.S."/>
            <person name="De Juan-Pardo E."/>
            <person name="Demeyer K."/>
            <person name="Hole K."/>
            <person name="Larrea E."/>
            <person name="Timmerman E."/>
            <person name="Prieto J."/>
            <person name="Arnesen T."/>
            <person name="Sherman F."/>
            <person name="Gevaert K."/>
            <person name="Aldabe R."/>
        </authorList>
    </citation>
    <scope>IDENTIFICATION BY MASS SPECTROMETRY [LARGE SCALE ANALYSIS]</scope>
</reference>
<reference key="12">
    <citation type="journal article" date="2014" name="Diabetes">
        <title>The adaptor protein APPL2 inhibits insulin-stimulated glucose uptake by interacting with TBC1D1 in skeletal muscle.</title>
        <authorList>
            <person name="Cheng K.K."/>
            <person name="Zhu W."/>
            <person name="Chen B."/>
            <person name="Wang Y."/>
            <person name="Wu D."/>
            <person name="Sweeney G."/>
            <person name="Wang B."/>
            <person name="Lam K.S."/>
            <person name="Xu A."/>
        </authorList>
    </citation>
    <scope>FUNCTION</scope>
    <scope>INTERACTION WITH TBC1D1</scope>
</reference>
<reference key="13">
    <citation type="journal article" date="2016" name="Oncotarget">
        <title>APPL proteins promote TGFbeta-induced nuclear transport of the TGFbeta type I receptor intracellular domain.</title>
        <authorList>
            <person name="Song J."/>
            <person name="Mu Y."/>
            <person name="Li C."/>
            <person name="Bergh A."/>
            <person name="Miaczynska M."/>
            <person name="Heldin C.H."/>
            <person name="Landstroem M."/>
        </authorList>
    </citation>
    <scope>FUNCTION</scope>
</reference>
<reference evidence="24" key="14">
    <citation type="journal article" date="2012" name="J. Biol. Chem.">
        <title>Membrane curvature protein exhibits interdomain flexibility and binds a small GTPase.</title>
        <authorList>
            <person name="King G.J."/>
            <person name="Stockli J."/>
            <person name="Hu S.H."/>
            <person name="Winnen B."/>
            <person name="Duprez W.G."/>
            <person name="Meoli C.C."/>
            <person name="Junutula J.R."/>
            <person name="Jarrott R.J."/>
            <person name="James D.E."/>
            <person name="Whitten A.E."/>
            <person name="Martin J.L."/>
        </authorList>
    </citation>
    <scope>X-RAY CRYSTALLOGRAPHY (3.50 ANGSTROMS) OF 2-384 IN COMPLEX WITH RAB31</scope>
    <scope>SUBUNIT</scope>
</reference>
<reference evidence="25" key="15">
    <citation type="submission" date="2015-06" db="PDB data bank">
        <title>Crystal Structure of Human APPL BAR-PH Heterodimer.</title>
        <authorList>
            <person name="Chen Y.J."/>
            <person name="Chen B."/>
        </authorList>
    </citation>
    <scope>X-RAY CRYSTALLOGRAPHY (2.90 ANGSTROMS) OF 1-375</scope>
</reference>
<comment type="function">
    <text evidence="2 9 13 16 17">Multifunctional adapter protein that binds to various membrane receptors, nuclear factors and signaling proteins to regulate many processes, such as cell proliferation, immune response, endosomal trafficking and cell metabolism (PubMed:15016378, PubMed:24879834, PubMed:26583432). Regulates signaling pathway leading to cell proliferation through interaction with RAB5A and subunits of the NuRD/MeCP1 complex (PubMed:15016378). Plays a role in immune response by modulating phagocytosis, inflammatory and innate immune responses. In macrophages, enhances Fc-gamma receptor-mediated phagocytosis through interaction with RAB31 leading to activation of PI3K/Akt signaling. In response to LPS, modulates inflammatory responses by playing a key role on the regulation of TLR4 signaling and in the nuclear translocation of RELA/NF-kappa-B p65 and the secretion of pro- and anti-inflammatory cytokines. Also functions as a negative regulator of innate immune response via inhibition of AKT1 signaling pathway by forming a complex with APPL1 and PIK3R1 (By similarity). Plays a role in endosomal trafficking of TGFBR1 from the endosomes to the nucleus (PubMed:26583432). Plays a role in cell metabolism by regulating adiponecting ans insulin signaling pathways and adaptative thermogenesis (By similarity) (PubMed:24879834). In muscle, negatively regulates adiponectin-simulated glucose uptake and fatty acid oxidation by inhibiting adiponectin signaling pathway through APPL1 sequestration thereby antagonizing APPL1 action (By similarity). In muscles, negatively regulates insulin-induced plasma membrane recruitment of GLUT4 and glucose uptake through interaction with TBC1D1 (PubMed:24879834). Plays a role in cold and diet-induced adaptive thermogenesis by activating ventromedial hypothalamus (VMH) neurons throught AMPK inhibition which enhances sympathetic outflow to subcutaneous white adipose tissue (sWAT), sWAT beiging and cold tolerance (By similarity). Also plays a role in other signaling pathways namely Wnt/beta-catenin, HGF and glucocorticoid receptor signaling (By similarity) (PubMed:19433865). Positive regulator of beta-catenin/TCF-dependent transcription through direct interaction with RUVBL2/reptin resulting in the relief of RUVBL2-mediated repression of beta-catenin/TCF target genes by modulating the interactions within the beta-catenin-reptin-HDAC complex (PubMed:19433865). May affect adult neurogenesis in hippocampus and olfactory system via regulating the sensitivity of glucocorticoid receptor. Required for fibroblast migration through HGF cell signaling (By similarity).</text>
</comment>
<comment type="subunit">
    <text evidence="2 9 11 12 13 14 15 16">Homodimer (PubMed:18034774, PubMed:23055524). Homotetramer (PubMed:23055524). Binds RAB5A/Rab5 through an N-terminal domain. This interaction is essential for its recruitment to endosomal membranes as well as its role in cell proliferation (PubMed:15016378). Binds subunits of the NuRD/MeCP1 complex (PubMed:15016378). Interacts with FSHR; interaction is independent of follicle stimulating hormone stimulation (PubMed:17030088). Interacts with APPL1; the interaction is decreased by adiponectin in a time-dependent manner (PubMed:17030088, PubMed:18034774). Forms a complex comprising APPL1, RUVBL2, CTNNB1, HDAC1 and HDAC2; interaction reduces interaction between CTNNB1, HDAC1, HDAC2 and RUVBL2 leading to the decrease of deacetylase activity of this complex; affects the recruitment of repressive complexes to the Wnt target genes (PubMed:19433865). Interacts (via BAR domain) with TBC1D1; interaction is dependent of TBC1D1 phosphorylation at 'Ser-235'; interaction diminishes the phosphorylation of TBC1D1 at 'Thr-596', resulting in inhibition of SLC2A4 translocation and glucose uptake (PubMed:24879834). Interacts with ANXA2; targets APPL2 to endosomes and acting in parallel to RAB5A (PubMed:21645192). Interacts with RAB31 (in GTP-bound form); interaction contributes to or enhances recruitment of APPL2 to the phagosomes; interaction enhances Fc-gamma receptor-mediated phagocytosis through PI3K/Akt signaling in macrophages (PubMed:23055524). Interacts with PIK3R1; forms a complex with PIK3R1 and APPL1 (By similarity). Interacts (via BAR domain) with ADIPOR1; hinders the accessibility of APPL1 to ADIPOR1; negatively regulates adiponectin signaling; ADIPOQ dissociates this interaction and facilitates the recruitment of APPL1 to ADIPOR1 (By similarity). Interacts (via BAR domain) with ADIPOR2; ADIPOQ dissociates this interaction (By similarity).</text>
</comment>
<comment type="interaction">
    <interactant intactId="EBI-741261">
        <id>Q8NEU8</id>
    </interactant>
    <interactant intactId="EBI-741243">
        <id>Q9UKG1</id>
        <label>APPL1</label>
    </interactant>
    <organismsDiffer>false</organismsDiffer>
    <experiments>23</experiments>
</comment>
<comment type="interaction">
    <interactant intactId="EBI-741261">
        <id>Q8NEU8</id>
    </interactant>
    <interactant intactId="EBI-741261">
        <id>Q8NEU8</id>
        <label>APPL2</label>
    </interactant>
    <organismsDiffer>false</organismsDiffer>
    <experiments>4</experiments>
</comment>
<comment type="interaction">
    <interactant intactId="EBI-741261">
        <id>Q8NEU8</id>
    </interactant>
    <interactant intactId="EBI-520375">
        <id>P78560</id>
        <label>CRADD</label>
    </interactant>
    <organismsDiffer>false</organismsDiffer>
    <experiments>4</experiments>
</comment>
<comment type="interaction">
    <interactant intactId="EBI-741261">
        <id>Q8NEU8</id>
    </interactant>
    <interactant intactId="EBI-6255981">
        <id>Q7L775</id>
        <label>EPM2AIP1</label>
    </interactant>
    <organismsDiffer>false</organismsDiffer>
    <experiments>3</experiments>
</comment>
<comment type="interaction">
    <interactant intactId="EBI-741261">
        <id>Q8NEU8</id>
    </interactant>
    <interactant intactId="EBI-14069005">
        <id>Q9BVG8-5</id>
        <label>KIFC3</label>
    </interactant>
    <organismsDiffer>false</organismsDiffer>
    <experiments>3</experiments>
</comment>
<comment type="interaction">
    <interactant intactId="EBI-741261">
        <id>Q8NEU8</id>
    </interactant>
    <interactant intactId="EBI-726739">
        <id>Q9UPY8</id>
        <label>MAPRE3</label>
    </interactant>
    <organismsDiffer>false</organismsDiffer>
    <experiments>3</experiments>
</comment>
<comment type="interaction">
    <interactant intactId="EBI-741261">
        <id>Q8NEU8</id>
    </interactant>
    <interactant intactId="EBI-11986293">
        <id>P0CG20</id>
        <label>PRR35</label>
    </interactant>
    <organismsDiffer>false</organismsDiffer>
    <experiments>3</experiments>
</comment>
<comment type="interaction">
    <interactant intactId="EBI-741261">
        <id>Q8NEU8</id>
    </interactant>
    <interactant intactId="EBI-399456">
        <id>Q9UL26</id>
        <label>RAB22A</label>
    </interactant>
    <organismsDiffer>false</organismsDiffer>
    <experiments>8</experiments>
</comment>
<comment type="interaction">
    <interactant intactId="EBI-741261">
        <id>Q8NEU8</id>
    </interactant>
    <interactant intactId="EBI-1054923">
        <id>P51148</id>
        <label>RAB5C</label>
    </interactant>
    <organismsDiffer>false</organismsDiffer>
    <experiments>8</experiments>
</comment>
<comment type="interaction">
    <interactant intactId="EBI-741261">
        <id>Q8NEU8</id>
    </interactant>
    <interactant intactId="EBI-723127">
        <id>Q9H5I1</id>
        <label>SUV39H2</label>
    </interactant>
    <organismsDiffer>false</organismsDiffer>
    <experiments>6</experiments>
</comment>
<comment type="interaction">
    <interactant intactId="EBI-741261">
        <id>Q8NEU8</id>
    </interactant>
    <interactant intactId="EBI-11977575">
        <id>Q9H5I1-2</id>
        <label>SUV39H2</label>
    </interactant>
    <organismsDiffer>false</organismsDiffer>
    <experiments>3</experiments>
</comment>
<comment type="interaction">
    <interactant intactId="EBI-741261">
        <id>Q8NEU8</id>
    </interactant>
    <interactant intactId="EBI-1644036">
        <id>Q86TI0</id>
        <label>TBC1D1</label>
    </interactant>
    <organismsDiffer>false</organismsDiffer>
    <experiments>4</experiments>
</comment>
<comment type="subcellular location">
    <subcellularLocation>
        <location evidence="9">Early endosome membrane</location>
        <topology evidence="9">Peripheral membrane protein</topology>
    </subcellularLocation>
    <subcellularLocation>
        <location evidence="9 12">Nucleus</location>
    </subcellularLocation>
    <subcellularLocation>
        <location evidence="12">Cell membrane</location>
    </subcellularLocation>
    <subcellularLocation>
        <location evidence="14">Endosome membrane</location>
    </subcellularLocation>
    <subcellularLocation>
        <location evidence="2">Cytoplasm</location>
    </subcellularLocation>
    <subcellularLocation>
        <location evidence="2">Cytoplasmic vesicle</location>
        <location evidence="2">Phagosome</location>
    </subcellularLocation>
    <subcellularLocation>
        <location evidence="2">Cell projection</location>
        <location evidence="2">Ruffle</location>
    </subcellularLocation>
    <subcellularLocation>
        <location evidence="2">Cell projection</location>
        <location evidence="2">Ruffle membrane</location>
    </subcellularLocation>
    <subcellularLocation>
        <location evidence="2">Cell membrane</location>
    </subcellularLocation>
    <subcellularLocation>
        <location evidence="2">Cytoplasmic vesicle</location>
        <location evidence="2">Phagosome membrane</location>
    </subcellularLocation>
    <text evidence="2 9 12">Early endosomal membrane-bound and nuclear (PubMed:15016378). Translocated into the nucleus upon release from endosomal membranes following internalization of EGF (PubMed:15016378). Associates dynamically with cytoplasmic membrane structures that undergo changes in shape, movement, fusion and fission events (PubMed:18034774). PI(4,5)P2 levels are important for membrane association of APPL2 (PubMed:18034774). Absent of endosome in macrophage. Colocalized with RAB31 at early-stage phagosome (By similarity). Localized on macropinosomes in LPS-activated macrophages. Associated with membrane domains in contact with pathogens and pathogen-derived ligands like LPS. First recruited to the ruffles, and accumulates on macropinosomes (By similarity).</text>
</comment>
<comment type="alternative products">
    <event type="alternative splicing"/>
    <isoform>
        <id>Q8NEU8-1</id>
        <name>1</name>
        <sequence type="displayed"/>
    </isoform>
    <isoform>
        <id>Q8NEU8-2</id>
        <name>2</name>
        <sequence type="described" ref="VSP_044771"/>
    </isoform>
    <isoform>
        <id>Q8NEU8-3</id>
        <name>3</name>
        <sequence type="described" ref="VSP_044772"/>
    </isoform>
</comment>
<comment type="tissue specificity">
    <text evidence="7">High levels in brain, heart, kidney and skeletal muscle.</text>
</comment>
<comment type="domain">
    <text evidence="2 12 13">The BAR domain is necessary and sufficient for mediating homotypic and heterotypic interactions; associates with cytoplasmic membrane structures; mediates interaction with TBC1D1 and ADIPOR1 (By similarity) (PubMed:18034774). The PH and PID domains mediate phosphoinositide binding (PubMed:18034774). The PID domain mediates phosphatidylserine binding and allows localization to cytosolic membrane structures and nucleus (PubMed:18034774). The PH domain allows localization to the plasma membrane, cytosolic vesicles and distinct nuclear and perinuclear structures and is sufficient for RUVBL2 interaction (PubMed:18034774, PubMed:19433865).</text>
</comment>
<comment type="disease">
    <text evidence="7">A chromosomal aberration involving APPL2/DIP13B is found in patients with chromosome 22q13.3 deletion syndrome. Translocation t(12;22)(q24.1;q13.3) with SHANK3/PSAP2.</text>
</comment>
<dbReference type="EMBL" id="AY113704">
    <property type="protein sequence ID" value="AAM55530.1"/>
    <property type="molecule type" value="mRNA"/>
</dbReference>
<dbReference type="EMBL" id="AK001521">
    <property type="status" value="NOT_ANNOTATED_CDS"/>
    <property type="molecule type" value="mRNA"/>
</dbReference>
<dbReference type="EMBL" id="AK296610">
    <property type="protein sequence ID" value="BAH12397.1"/>
    <property type="molecule type" value="mRNA"/>
</dbReference>
<dbReference type="EMBL" id="AK297100">
    <property type="protein sequence ID" value="BAH12496.1"/>
    <property type="molecule type" value="mRNA"/>
</dbReference>
<dbReference type="EMBL" id="AC016257">
    <property type="status" value="NOT_ANNOTATED_CDS"/>
    <property type="molecule type" value="Genomic_DNA"/>
</dbReference>
<dbReference type="EMBL" id="AC078874">
    <property type="status" value="NOT_ANNOTATED_CDS"/>
    <property type="molecule type" value="Genomic_DNA"/>
</dbReference>
<dbReference type="EMBL" id="BC033731">
    <property type="protein sequence ID" value="AAH33731.1"/>
    <property type="molecule type" value="mRNA"/>
</dbReference>
<dbReference type="CCDS" id="CCDS58275.1">
    <molecule id="Q8NEU8-2"/>
</dbReference>
<dbReference type="CCDS" id="CCDS58276.1">
    <molecule id="Q8NEU8-3"/>
</dbReference>
<dbReference type="CCDS" id="CCDS9101.1">
    <molecule id="Q8NEU8-1"/>
</dbReference>
<dbReference type="RefSeq" id="NP_001238833.1">
    <molecule id="Q8NEU8-3"/>
    <property type="nucleotide sequence ID" value="NM_001251904.2"/>
</dbReference>
<dbReference type="RefSeq" id="NP_001238834.1">
    <molecule id="Q8NEU8-2"/>
    <property type="nucleotide sequence ID" value="NM_001251905.2"/>
</dbReference>
<dbReference type="RefSeq" id="NP_060641.2">
    <molecule id="Q8NEU8-1"/>
    <property type="nucleotide sequence ID" value="NM_018171.3"/>
</dbReference>
<dbReference type="RefSeq" id="XP_016875041.1">
    <property type="nucleotide sequence ID" value="XM_017019552.1"/>
</dbReference>
<dbReference type="RefSeq" id="XP_016875042.1">
    <property type="nucleotide sequence ID" value="XM_017019553.1"/>
</dbReference>
<dbReference type="PDB" id="4H8S">
    <property type="method" value="X-ray"/>
    <property type="resolution" value="3.50 A"/>
    <property type="chains" value="A/B/C/D=2-384"/>
</dbReference>
<dbReference type="PDB" id="5C5B">
    <property type="method" value="X-ray"/>
    <property type="resolution" value="2.90 A"/>
    <property type="chains" value="B/D=1-375"/>
</dbReference>
<dbReference type="PDBsum" id="4H8S"/>
<dbReference type="PDBsum" id="5C5B"/>
<dbReference type="SASBDB" id="Q8NEU8"/>
<dbReference type="SMR" id="Q8NEU8"/>
<dbReference type="BioGRID" id="120495">
    <property type="interactions" value="80"/>
</dbReference>
<dbReference type="FunCoup" id="Q8NEU8">
    <property type="interactions" value="952"/>
</dbReference>
<dbReference type="IntAct" id="Q8NEU8">
    <property type="interactions" value="58"/>
</dbReference>
<dbReference type="MINT" id="Q8NEU8"/>
<dbReference type="STRING" id="9606.ENSP00000446917"/>
<dbReference type="MoonDB" id="Q8NEU8">
    <property type="type" value="Curated"/>
</dbReference>
<dbReference type="GlyGen" id="Q8NEU8">
    <property type="glycosylation" value="1 site, 1 O-linked glycan (1 site)"/>
</dbReference>
<dbReference type="iPTMnet" id="Q8NEU8"/>
<dbReference type="MetOSite" id="Q8NEU8"/>
<dbReference type="PhosphoSitePlus" id="Q8NEU8"/>
<dbReference type="BioMuta" id="APPL2"/>
<dbReference type="DMDM" id="160419148"/>
<dbReference type="jPOST" id="Q8NEU8"/>
<dbReference type="MassIVE" id="Q8NEU8"/>
<dbReference type="PaxDb" id="9606-ENSP00000446917"/>
<dbReference type="PeptideAtlas" id="Q8NEU8"/>
<dbReference type="ProteomicsDB" id="25020"/>
<dbReference type="ProteomicsDB" id="29665"/>
<dbReference type="ProteomicsDB" id="73219">
    <molecule id="Q8NEU8-1"/>
</dbReference>
<dbReference type="Pumba" id="Q8NEU8"/>
<dbReference type="Antibodypedia" id="30637">
    <property type="antibodies" value="160 antibodies from 22 providers"/>
</dbReference>
<dbReference type="DNASU" id="55198"/>
<dbReference type="Ensembl" id="ENST00000258530.8">
    <molecule id="Q8NEU8-1"/>
    <property type="protein sequence ID" value="ENSP00000258530.3"/>
    <property type="gene ID" value="ENSG00000136044.12"/>
</dbReference>
<dbReference type="Ensembl" id="ENST00000539978.6">
    <molecule id="Q8NEU8-2"/>
    <property type="protein sequence ID" value="ENSP00000444472.2"/>
    <property type="gene ID" value="ENSG00000136044.12"/>
</dbReference>
<dbReference type="Ensembl" id="ENST00000551662.5">
    <molecule id="Q8NEU8-3"/>
    <property type="protein sequence ID" value="ENSP00000446917.1"/>
    <property type="gene ID" value="ENSG00000136044.12"/>
</dbReference>
<dbReference type="GeneID" id="55198"/>
<dbReference type="KEGG" id="hsa:55198"/>
<dbReference type="MANE-Select" id="ENST00000258530.8">
    <property type="protein sequence ID" value="ENSP00000258530.3"/>
    <property type="RefSeq nucleotide sequence ID" value="NM_018171.5"/>
    <property type="RefSeq protein sequence ID" value="NP_060641.2"/>
</dbReference>
<dbReference type="UCSC" id="uc001tlf.2">
    <molecule id="Q8NEU8-1"/>
    <property type="organism name" value="human"/>
</dbReference>
<dbReference type="AGR" id="HGNC:18242"/>
<dbReference type="CTD" id="55198"/>
<dbReference type="DisGeNET" id="55198"/>
<dbReference type="GeneCards" id="APPL2"/>
<dbReference type="HGNC" id="HGNC:18242">
    <property type="gene designation" value="APPL2"/>
</dbReference>
<dbReference type="HPA" id="ENSG00000136044">
    <property type="expression patterns" value="Low tissue specificity"/>
</dbReference>
<dbReference type="MIM" id="606231">
    <property type="type" value="gene"/>
</dbReference>
<dbReference type="neXtProt" id="NX_Q8NEU8"/>
<dbReference type="OpenTargets" id="ENSG00000136044"/>
<dbReference type="VEuPathDB" id="HostDB:ENSG00000136044"/>
<dbReference type="eggNOG" id="KOG0521">
    <property type="taxonomic scope" value="Eukaryota"/>
</dbReference>
<dbReference type="eggNOG" id="KOG3536">
    <property type="taxonomic scope" value="Eukaryota"/>
</dbReference>
<dbReference type="GeneTree" id="ENSGT00940000158319"/>
<dbReference type="HOGENOM" id="CLU_025935_0_0_1"/>
<dbReference type="InParanoid" id="Q8NEU8"/>
<dbReference type="OMA" id="ENDEWIC"/>
<dbReference type="OrthoDB" id="10070851at2759"/>
<dbReference type="PAN-GO" id="Q8NEU8">
    <property type="GO annotations" value="2 GO annotations based on evolutionary models"/>
</dbReference>
<dbReference type="PhylomeDB" id="Q8NEU8"/>
<dbReference type="TreeFam" id="TF328669"/>
<dbReference type="PathwayCommons" id="Q8NEU8"/>
<dbReference type="SignaLink" id="Q8NEU8"/>
<dbReference type="BioGRID-ORCS" id="55198">
    <property type="hits" value="16 hits in 1160 CRISPR screens"/>
</dbReference>
<dbReference type="CD-CODE" id="FB4E32DD">
    <property type="entry name" value="Presynaptic clusters and postsynaptic densities"/>
</dbReference>
<dbReference type="ChiTaRS" id="APPL2">
    <property type="organism name" value="human"/>
</dbReference>
<dbReference type="EvolutionaryTrace" id="Q8NEU8"/>
<dbReference type="GeneWiki" id="APPL2"/>
<dbReference type="GenomeRNAi" id="55198"/>
<dbReference type="Pharos" id="Q8NEU8">
    <property type="development level" value="Tbio"/>
</dbReference>
<dbReference type="PRO" id="PR:Q8NEU8"/>
<dbReference type="Proteomes" id="UP000005640">
    <property type="component" value="Chromosome 12"/>
</dbReference>
<dbReference type="RNAct" id="Q8NEU8">
    <property type="molecule type" value="protein"/>
</dbReference>
<dbReference type="Bgee" id="ENSG00000136044">
    <property type="expression patterns" value="Expressed in skin of leg and 182 other cell types or tissues"/>
</dbReference>
<dbReference type="ExpressionAtlas" id="Q8NEU8">
    <property type="expression patterns" value="baseline and differential"/>
</dbReference>
<dbReference type="GO" id="GO:0031410">
    <property type="term" value="C:cytoplasmic vesicle"/>
    <property type="evidence" value="ECO:0000314"/>
    <property type="project" value="UniProtKB"/>
</dbReference>
<dbReference type="GO" id="GO:0031901">
    <property type="term" value="C:early endosome membrane"/>
    <property type="evidence" value="ECO:0007669"/>
    <property type="project" value="UniProtKB-SubCell"/>
</dbReference>
<dbReference type="GO" id="GO:0032009">
    <property type="term" value="C:early phagosome"/>
    <property type="evidence" value="ECO:0000250"/>
    <property type="project" value="UniProtKB"/>
</dbReference>
<dbReference type="GO" id="GO:0036186">
    <property type="term" value="C:early phagosome membrane"/>
    <property type="evidence" value="ECO:0000250"/>
    <property type="project" value="UniProtKB"/>
</dbReference>
<dbReference type="GO" id="GO:0005768">
    <property type="term" value="C:endosome"/>
    <property type="evidence" value="ECO:0000314"/>
    <property type="project" value="UniProtKB"/>
</dbReference>
<dbReference type="GO" id="GO:0010008">
    <property type="term" value="C:endosome membrane"/>
    <property type="evidence" value="ECO:0000314"/>
    <property type="project" value="UniProtKB"/>
</dbReference>
<dbReference type="GO" id="GO:0070062">
    <property type="term" value="C:extracellular exosome"/>
    <property type="evidence" value="ECO:0007005"/>
    <property type="project" value="UniProtKB"/>
</dbReference>
<dbReference type="GO" id="GO:0044354">
    <property type="term" value="C:macropinosome"/>
    <property type="evidence" value="ECO:0000250"/>
    <property type="project" value="UniProtKB"/>
</dbReference>
<dbReference type="GO" id="GO:0016020">
    <property type="term" value="C:membrane"/>
    <property type="evidence" value="ECO:0000314"/>
    <property type="project" value="UniProtKB"/>
</dbReference>
<dbReference type="GO" id="GO:0005634">
    <property type="term" value="C:nucleus"/>
    <property type="evidence" value="ECO:0000314"/>
    <property type="project" value="UniProtKB"/>
</dbReference>
<dbReference type="GO" id="GO:0005886">
    <property type="term" value="C:plasma membrane"/>
    <property type="evidence" value="ECO:0000314"/>
    <property type="project" value="UniProtKB"/>
</dbReference>
<dbReference type="GO" id="GO:0001726">
    <property type="term" value="C:ruffle"/>
    <property type="evidence" value="ECO:0000250"/>
    <property type="project" value="UniProtKB"/>
</dbReference>
<dbReference type="GO" id="GO:0032587">
    <property type="term" value="C:ruffle membrane"/>
    <property type="evidence" value="ECO:0000250"/>
    <property type="project" value="UniProtKB"/>
</dbReference>
<dbReference type="GO" id="GO:0031982">
    <property type="term" value="C:vesicle"/>
    <property type="evidence" value="ECO:0000314"/>
    <property type="project" value="UniProtKB"/>
</dbReference>
<dbReference type="GO" id="GO:0042802">
    <property type="term" value="F:identical protein binding"/>
    <property type="evidence" value="ECO:0000353"/>
    <property type="project" value="IntAct"/>
</dbReference>
<dbReference type="GO" id="GO:0035091">
    <property type="term" value="F:phosphatidylinositol binding"/>
    <property type="evidence" value="ECO:0000314"/>
    <property type="project" value="UniProtKB"/>
</dbReference>
<dbReference type="GO" id="GO:0001786">
    <property type="term" value="F:phosphatidylserine binding"/>
    <property type="evidence" value="ECO:0000314"/>
    <property type="project" value="UniProtKB"/>
</dbReference>
<dbReference type="GO" id="GO:0042803">
    <property type="term" value="F:protein homodimerization activity"/>
    <property type="evidence" value="ECO:0000314"/>
    <property type="project" value="UniProtKB"/>
</dbReference>
<dbReference type="GO" id="GO:0044877">
    <property type="term" value="F:protein-containing complex binding"/>
    <property type="evidence" value="ECO:0000353"/>
    <property type="project" value="UniProtKB"/>
</dbReference>
<dbReference type="GO" id="GO:0033211">
    <property type="term" value="P:adiponectin-activated signaling pathway"/>
    <property type="evidence" value="ECO:0000250"/>
    <property type="project" value="UniProtKB"/>
</dbReference>
<dbReference type="GO" id="GO:0035729">
    <property type="term" value="P:cellular response to hepatocyte growth factor stimulus"/>
    <property type="evidence" value="ECO:0000250"/>
    <property type="project" value="UniProtKB"/>
</dbReference>
<dbReference type="GO" id="GO:0009631">
    <property type="term" value="P:cold acclimation"/>
    <property type="evidence" value="ECO:0000250"/>
    <property type="project" value="UniProtKB"/>
</dbReference>
<dbReference type="GO" id="GO:0002024">
    <property type="term" value="P:diet induced thermogenesis"/>
    <property type="evidence" value="ECO:0000250"/>
    <property type="project" value="UniProtKB"/>
</dbReference>
<dbReference type="GO" id="GO:0042593">
    <property type="term" value="P:glucose homeostasis"/>
    <property type="evidence" value="ECO:0000315"/>
    <property type="project" value="UniProtKB"/>
</dbReference>
<dbReference type="GO" id="GO:1900077">
    <property type="term" value="P:negative regulation of cellular response to insulin stimulus"/>
    <property type="evidence" value="ECO:0000250"/>
    <property type="project" value="UniProtKB"/>
</dbReference>
<dbReference type="GO" id="GO:1900016">
    <property type="term" value="P:negative regulation of cytokine production involved in inflammatory response"/>
    <property type="evidence" value="ECO:0000250"/>
    <property type="project" value="UniProtKB"/>
</dbReference>
<dbReference type="GO" id="GO:0046325">
    <property type="term" value="P:negative regulation of D-glucose import"/>
    <property type="evidence" value="ECO:0000315"/>
    <property type="project" value="UniProtKB"/>
</dbReference>
<dbReference type="GO" id="GO:0046322">
    <property type="term" value="P:negative regulation of fatty acid oxidation"/>
    <property type="evidence" value="ECO:0000250"/>
    <property type="project" value="UniProtKB"/>
</dbReference>
<dbReference type="GO" id="GO:2000178">
    <property type="term" value="P:negative regulation of neural precursor cell proliferation"/>
    <property type="evidence" value="ECO:0000250"/>
    <property type="project" value="UniProtKB"/>
</dbReference>
<dbReference type="GO" id="GO:0050768">
    <property type="term" value="P:negative regulation of neurogenesis"/>
    <property type="evidence" value="ECO:0000250"/>
    <property type="project" value="UniProtKB"/>
</dbReference>
<dbReference type="GO" id="GO:0120162">
    <property type="term" value="P:positive regulation of cold-induced thermogenesis"/>
    <property type="evidence" value="ECO:0000250"/>
    <property type="project" value="UniProtKB"/>
</dbReference>
<dbReference type="GO" id="GO:1905451">
    <property type="term" value="P:positive regulation of Fc-gamma receptor signaling pathway involved in phagocytosis"/>
    <property type="evidence" value="ECO:0000250"/>
    <property type="project" value="UniProtKB"/>
</dbReference>
<dbReference type="GO" id="GO:1905303">
    <property type="term" value="P:positive regulation of macropinocytosis"/>
    <property type="evidence" value="ECO:0000250"/>
    <property type="project" value="UniProtKB"/>
</dbReference>
<dbReference type="GO" id="GO:0060100">
    <property type="term" value="P:positive regulation of phagocytosis, engulfment"/>
    <property type="evidence" value="ECO:0000250"/>
    <property type="project" value="UniProtKB"/>
</dbReference>
<dbReference type="GO" id="GO:0051289">
    <property type="term" value="P:protein homotetramerization"/>
    <property type="evidence" value="ECO:0000314"/>
    <property type="project" value="UniProtKB"/>
</dbReference>
<dbReference type="GO" id="GO:0006606">
    <property type="term" value="P:protein import into nucleus"/>
    <property type="evidence" value="ECO:0000314"/>
    <property type="project" value="UniProtKB"/>
</dbReference>
<dbReference type="GO" id="GO:0010762">
    <property type="term" value="P:regulation of fibroblast migration"/>
    <property type="evidence" value="ECO:0000250"/>
    <property type="project" value="UniProtKB"/>
</dbReference>
<dbReference type="GO" id="GO:2000045">
    <property type="term" value="P:regulation of G1/S transition of mitotic cell cycle"/>
    <property type="evidence" value="ECO:0000314"/>
    <property type="project" value="UniProtKB"/>
</dbReference>
<dbReference type="GO" id="GO:0045088">
    <property type="term" value="P:regulation of innate immune response"/>
    <property type="evidence" value="ECO:0000250"/>
    <property type="project" value="UniProtKB"/>
</dbReference>
<dbReference type="GO" id="GO:0034143">
    <property type="term" value="P:regulation of toll-like receptor 4 signaling pathway"/>
    <property type="evidence" value="ECO:0000250"/>
    <property type="project" value="UniProtKB"/>
</dbReference>
<dbReference type="GO" id="GO:0007165">
    <property type="term" value="P:signal transduction"/>
    <property type="evidence" value="ECO:0000304"/>
    <property type="project" value="UniProtKB"/>
</dbReference>
<dbReference type="GO" id="GO:0023052">
    <property type="term" value="P:signaling"/>
    <property type="evidence" value="ECO:0000318"/>
    <property type="project" value="GO_Central"/>
</dbReference>
<dbReference type="GO" id="GO:0007179">
    <property type="term" value="P:transforming growth factor beta receptor signaling pathway"/>
    <property type="evidence" value="ECO:0000315"/>
    <property type="project" value="UniProtKB"/>
</dbReference>
<dbReference type="CDD" id="cd13247">
    <property type="entry name" value="BAR-PH_APPL"/>
    <property type="match status" value="1"/>
</dbReference>
<dbReference type="CDD" id="cd07632">
    <property type="entry name" value="BAR_APPL2"/>
    <property type="match status" value="1"/>
</dbReference>
<dbReference type="CDD" id="cd13158">
    <property type="entry name" value="PTB_APPL"/>
    <property type="match status" value="1"/>
</dbReference>
<dbReference type="FunFam" id="2.30.29.30:FF:000160">
    <property type="entry name" value="DCC-interacting protein 13-beta isoform X2"/>
    <property type="match status" value="1"/>
</dbReference>
<dbReference type="FunFam" id="1.20.1270.60:FF:000031">
    <property type="entry name" value="Putative DCC-interacting protein 13-beta isoform 2"/>
    <property type="match status" value="1"/>
</dbReference>
<dbReference type="FunFam" id="2.30.29.30:FF:000067">
    <property type="entry name" value="Putative DCC-interacting protein 13-beta isoform 2"/>
    <property type="match status" value="1"/>
</dbReference>
<dbReference type="Gene3D" id="1.20.1270.60">
    <property type="entry name" value="Arfaptin homology (AH) domain/BAR domain"/>
    <property type="match status" value="1"/>
</dbReference>
<dbReference type="Gene3D" id="2.30.29.30">
    <property type="entry name" value="Pleckstrin-homology domain (PH domain)/Phosphotyrosine-binding domain (PTB)"/>
    <property type="match status" value="2"/>
</dbReference>
<dbReference type="InterPro" id="IPR027267">
    <property type="entry name" value="AH/BAR_dom_sf"/>
</dbReference>
<dbReference type="InterPro" id="IPR047239">
    <property type="entry name" value="BAR_APPL2"/>
</dbReference>
<dbReference type="InterPro" id="IPR004148">
    <property type="entry name" value="BAR_dom"/>
</dbReference>
<dbReference type="InterPro" id="IPR047181">
    <property type="entry name" value="DP13A/B"/>
</dbReference>
<dbReference type="InterPro" id="IPR011993">
    <property type="entry name" value="PH-like_dom_sf"/>
</dbReference>
<dbReference type="InterPro" id="IPR001849">
    <property type="entry name" value="PH_domain"/>
</dbReference>
<dbReference type="InterPro" id="IPR047236">
    <property type="entry name" value="PH_DP13A/B"/>
</dbReference>
<dbReference type="InterPro" id="IPR006020">
    <property type="entry name" value="PTB/PI_dom"/>
</dbReference>
<dbReference type="InterPro" id="IPR047237">
    <property type="entry name" value="PTB_APPL"/>
</dbReference>
<dbReference type="PANTHER" id="PTHR46415">
    <property type="entry name" value="ADAPTOR PROTEIN, PHOSPHOTYROSINE INTERACTION, PH DOMAIN AND LEUCINE ZIPPER-CONTAINING 2"/>
    <property type="match status" value="1"/>
</dbReference>
<dbReference type="PANTHER" id="PTHR46415:SF1">
    <property type="entry name" value="DCC-INTERACTING PROTEIN 13-BETA"/>
    <property type="match status" value="1"/>
</dbReference>
<dbReference type="Pfam" id="PF16746">
    <property type="entry name" value="BAR_3"/>
    <property type="match status" value="1"/>
</dbReference>
<dbReference type="Pfam" id="PF00169">
    <property type="entry name" value="PH"/>
    <property type="match status" value="1"/>
</dbReference>
<dbReference type="Pfam" id="PF00640">
    <property type="entry name" value="PID"/>
    <property type="match status" value="1"/>
</dbReference>
<dbReference type="SMART" id="SM00233">
    <property type="entry name" value="PH"/>
    <property type="match status" value="1"/>
</dbReference>
<dbReference type="SMART" id="SM00462">
    <property type="entry name" value="PTB"/>
    <property type="match status" value="1"/>
</dbReference>
<dbReference type="SUPFAM" id="SSF103657">
    <property type="entry name" value="BAR/IMD domain-like"/>
    <property type="match status" value="1"/>
</dbReference>
<dbReference type="SUPFAM" id="SSF50729">
    <property type="entry name" value="PH domain-like"/>
    <property type="match status" value="2"/>
</dbReference>
<dbReference type="PROSITE" id="PS50003">
    <property type="entry name" value="PH_DOMAIN"/>
    <property type="match status" value="1"/>
</dbReference>
<dbReference type="PROSITE" id="PS01179">
    <property type="entry name" value="PID"/>
    <property type="match status" value="1"/>
</dbReference>
<evidence type="ECO:0000250" key="1"/>
<evidence type="ECO:0000250" key="2">
    <source>
        <dbReference type="UniProtKB" id="Q8K3G9"/>
    </source>
</evidence>
<evidence type="ECO:0000255" key="3">
    <source>
        <dbReference type="PROSITE-ProRule" id="PRU00145"/>
    </source>
</evidence>
<evidence type="ECO:0000255" key="4">
    <source>
        <dbReference type="PROSITE-ProRule" id="PRU00148"/>
    </source>
</evidence>
<evidence type="ECO:0000255" key="5">
    <source>
        <dbReference type="PROSITE-ProRule" id="PRU00361"/>
    </source>
</evidence>
<evidence type="ECO:0000256" key="6">
    <source>
        <dbReference type="SAM" id="MobiDB-lite"/>
    </source>
</evidence>
<evidence type="ECO:0000269" key="7">
    <source>
    </source>
</evidence>
<evidence type="ECO:0000269" key="8">
    <source>
    </source>
</evidence>
<evidence type="ECO:0000269" key="9">
    <source>
    </source>
</evidence>
<evidence type="ECO:0000269" key="10">
    <source>
    </source>
</evidence>
<evidence type="ECO:0000269" key="11">
    <source>
    </source>
</evidence>
<evidence type="ECO:0000269" key="12">
    <source>
    </source>
</evidence>
<evidence type="ECO:0000269" key="13">
    <source>
    </source>
</evidence>
<evidence type="ECO:0000269" key="14">
    <source>
    </source>
</evidence>
<evidence type="ECO:0000269" key="15">
    <source>
    </source>
</evidence>
<evidence type="ECO:0000269" key="16">
    <source>
    </source>
</evidence>
<evidence type="ECO:0000269" key="17">
    <source>
    </source>
</evidence>
<evidence type="ECO:0000303" key="18">
    <source>
    </source>
</evidence>
<evidence type="ECO:0000303" key="19">
    <source ref="1"/>
</evidence>
<evidence type="ECO:0000305" key="20"/>
<evidence type="ECO:0000312" key="21">
    <source>
        <dbReference type="EMBL" id="AAH33731.1"/>
    </source>
</evidence>
<evidence type="ECO:0000312" key="22">
    <source>
        <dbReference type="EMBL" id="AAM55530.1"/>
    </source>
</evidence>
<evidence type="ECO:0000312" key="23">
    <source>
        <dbReference type="HGNC" id="HGNC:18242"/>
    </source>
</evidence>
<evidence type="ECO:0007744" key="24">
    <source>
        <dbReference type="PDB" id="4H8S"/>
    </source>
</evidence>
<evidence type="ECO:0007744" key="25">
    <source>
        <dbReference type="PDB" id="5C5B"/>
    </source>
</evidence>
<evidence type="ECO:0007829" key="26">
    <source>
        <dbReference type="PDB" id="5C5B"/>
    </source>
</evidence>
<name>DP13B_HUMAN</name>
<keyword id="KW-0002">3D-structure</keyword>
<keyword id="KW-0025">Alternative splicing</keyword>
<keyword id="KW-0131">Cell cycle</keyword>
<keyword id="KW-1003">Cell membrane</keyword>
<keyword id="KW-0966">Cell projection</keyword>
<keyword id="KW-0160">Chromosomal rearrangement</keyword>
<keyword id="KW-0963">Cytoplasm</keyword>
<keyword id="KW-0968">Cytoplasmic vesicle</keyword>
<keyword id="KW-0967">Endosome</keyword>
<keyword id="KW-0472">Membrane</keyword>
<keyword id="KW-0539">Nucleus</keyword>
<keyword id="KW-1267">Proteomics identification</keyword>
<keyword id="KW-1185">Reference proteome</keyword>
<sequence>MPAVDKLLLEEALQDSPQTRSLLSVFEEDAGTLTDYTNQLLQAMQRVYGAQNEMCLATQQLSKQLLAYEKQNFALGKGDEEVISTLHYFSKVVDELNLLHTELAKQLADTMVLPIIQFREKDLTEVSTLKDLFGLASNEHDLSMAKYSRLPKKKENEKVKTEVGKEVAAARRKQHLSSLQYYCALNALQYRKQMAMMEPMIGFAHGQINFFKKGAEMFSKRMDSFLSSVADMVQSIQVELEAEAEKMRVSQQELLSVDESVYTPDSDVAAPQINRNLIQKAGYLNLRNKTGLVTTTWERLYFFTQGGNLMCQPRGAVAGGLIQDLDNCSVMAVDCEDRRYCFQITTPNGKSGIILQAESRKENEEWICAINNISRQIYLTDNPEAVAIKLNQTALQAVTPITSFGKKQESSCPSQNLKNSEMENENDKIVPKATASLPEAEELIAPGTPIQFDIVLPATEFLDQNRGSRRTNPFGETEDESFPEAEDSLLQQMFIVRFLGSMAVKTDSTTEVIYEAMRQVLAARAIHNIFRMTESHLMVTSQSLRLIDPQTQVSRANFELTSVTQFAAHQENKRLVGFVIRVPESTGEESLSTYIFESNSEGEKICYAINLGKEIIEVQKDPEALAQLMLSIPLTNDGKYVLLNDQPDDDDGNPNEHRGAESEA</sequence>